<organism>
    <name type="scientific">Methanosarcina acetivorans (strain ATCC 35395 / DSM 2834 / JCM 12185 / C2A)</name>
    <dbReference type="NCBI Taxonomy" id="188937"/>
    <lineage>
        <taxon>Archaea</taxon>
        <taxon>Methanobacteriati</taxon>
        <taxon>Methanobacteriota</taxon>
        <taxon>Stenosarchaea group</taxon>
        <taxon>Methanomicrobia</taxon>
        <taxon>Methanosarcinales</taxon>
        <taxon>Methanosarcinaceae</taxon>
        <taxon>Methanosarcina</taxon>
    </lineage>
</organism>
<accession>Q8THK1</accession>
<feature type="chain" id="PRO_0000450072" description="Archaeosine synthase subunit beta">
    <location>
        <begin position="1"/>
        <end position="346"/>
    </location>
</feature>
<feature type="domain" description="Radical SAM core" evidence="2">
    <location>
        <begin position="36"/>
        <end position="276"/>
    </location>
</feature>
<feature type="binding site" evidence="3">
    <location>
        <position position="51"/>
    </location>
    <ligand>
        <name>[4Fe-4S] cluster</name>
        <dbReference type="ChEBI" id="CHEBI:49883"/>
        <note>4Fe-4S-S-AdoMet</note>
    </ligand>
</feature>
<feature type="binding site" evidence="3">
    <location>
        <position position="59"/>
    </location>
    <ligand>
        <name>[4Fe-4S] cluster</name>
        <dbReference type="ChEBI" id="CHEBI:49883"/>
        <note>4Fe-4S-S-AdoMet</note>
    </ligand>
</feature>
<feature type="binding site" evidence="3">
    <location>
        <position position="62"/>
    </location>
    <ligand>
        <name>[4Fe-4S] cluster</name>
        <dbReference type="ChEBI" id="CHEBI:49883"/>
        <note>4Fe-4S-S-AdoMet</note>
    </ligand>
</feature>
<feature type="mutagenesis site" description="Loss of archaeosine formation." evidence="3">
    <original>C</original>
    <variation>A</variation>
    <location>
        <position position="51"/>
    </location>
</feature>
<feature type="mutagenesis site" description="Loss of archaeosine formation." evidence="3">
    <original>C</original>
    <variation>A</variation>
    <location>
        <position position="59"/>
    </location>
</feature>
<feature type="mutagenesis site" description="Loss of archaeosine formation." evidence="3">
    <original>C</original>
    <variation>A</variation>
    <location>
        <position position="62"/>
    </location>
</feature>
<sequence>MSLNKAVLEIRQRIKVKPSPTNEPAASWTGTDLVNGVQTKTLTVIFKSAGCRWGKAGGCTMCGYVYDCASEPPSLEDYMAQLEKAMRKAEKFPEFMVKIFTSGSFLDEQEVLPEARDAILKNLTEDPRVTKVLVETRPNYVTEENVQACLSILKNKPFELAFGLETSSDKIRRDSINKGFTFQDFVHAAETAKKYGVTVKVYLMLKPLFLSERQAMEDIIRSIDDAAPYADTISINLCNVQKGTLVEALWEKGQYRPPWLWSIIEILRQAKAAHPELPLMSDPVGAGSKRGPHNCKICSSEVADSLRTFSLTQNPADLSTADCECKELWKKVLEIEDFTYGTPILD</sequence>
<evidence type="ECO:0000250" key="1">
    <source>
        <dbReference type="UniProtKB" id="Q5JE80"/>
    </source>
</evidence>
<evidence type="ECO:0000255" key="2">
    <source>
        <dbReference type="PROSITE-ProRule" id="PRU01266"/>
    </source>
</evidence>
<evidence type="ECO:0000269" key="3">
    <source>
    </source>
</evidence>
<evidence type="ECO:0000303" key="4">
    <source>
    </source>
</evidence>
<evidence type="ECO:0000305" key="5"/>
<evidence type="ECO:0000305" key="6">
    <source>
    </source>
</evidence>
<evidence type="ECO:0000312" key="7">
    <source>
        <dbReference type="EMBL" id="AAM07853.1"/>
    </source>
</evidence>
<proteinExistence type="evidence at protein level"/>
<comment type="function">
    <text evidence="3">Radical SAM enzyme involved in the synthesis of archaeosine, a modified nucleoside present in the dihydrouridine loop (D-loop) of archaeal tRNAs. Catalyzes the cleavage of the C(epsilon)-N bond of the lysine moiety of q0kN15-tRNA, leading to the formation of archaeosine at position 15 in tRNAs.</text>
</comment>
<comment type="catalytic activity">
    <reaction evidence="3">
        <text>7-N-[(5S)-5-amino-5-carboxypentyl]formamidino-7-deazaguanosine(15) in tRNA + S-adenosyl-L-methionine = archaeosine(15) in tRNA + L-1-piperideine-6-carboxylate + 5'-deoxyadenosine + L-methionine + 2 H(+)</text>
        <dbReference type="Rhea" id="RHEA:63220"/>
        <dbReference type="Rhea" id="RHEA-COMP:14170"/>
        <dbReference type="Rhea" id="RHEA-COMP:16288"/>
        <dbReference type="ChEBI" id="CHEBI:15378"/>
        <dbReference type="ChEBI" id="CHEBI:17319"/>
        <dbReference type="ChEBI" id="CHEBI:57844"/>
        <dbReference type="ChEBI" id="CHEBI:58769"/>
        <dbReference type="ChEBI" id="CHEBI:59789"/>
        <dbReference type="ChEBI" id="CHEBI:138803"/>
        <dbReference type="ChEBI" id="CHEBI:145542"/>
    </reaction>
    <physiologicalReaction direction="left-to-right" evidence="3">
        <dbReference type="Rhea" id="RHEA:63221"/>
    </physiologicalReaction>
</comment>
<comment type="cofactor">
    <cofactor evidence="3">
        <name>[4Fe-4S] cluster</name>
        <dbReference type="ChEBI" id="CHEBI:49883"/>
    </cofactor>
    <text evidence="6">Binds 1 [4Fe-4S] cluster. The cluster is coordinated with 3 cysteines and an exchangeable S-adenosyl-L-methionine.</text>
</comment>
<comment type="pathway">
    <text evidence="3">tRNA modification; archaeosine-tRNA biosynthesis.</text>
</comment>
<comment type="subunit">
    <text evidence="1 3">Forms a robust complex with the archaeosine synthase alpha subunit ArcS (PubMed:31740832). This complex likely consists of an alpha(2)beta(2) heterotetrameric structure (By similarity).</text>
</comment>
<comment type="similarity">
    <text evidence="5">Belongs to the radical SAM superfamily. RaSEA family.</text>
</comment>
<comment type="sequence caution" evidence="5">
    <conflict type="erroneous initiation">
        <sequence resource="EMBL-CDS" id="AAM07853"/>
    </conflict>
    <text>Extended N-terminus.</text>
</comment>
<gene>
    <name evidence="7" type="ordered locus">MA_4513</name>
</gene>
<reference key="1">
    <citation type="journal article" date="2002" name="Genome Res.">
        <title>The genome of Methanosarcina acetivorans reveals extensive metabolic and physiological diversity.</title>
        <authorList>
            <person name="Galagan J.E."/>
            <person name="Nusbaum C."/>
            <person name="Roy A."/>
            <person name="Endrizzi M.G."/>
            <person name="Macdonald P."/>
            <person name="FitzHugh W."/>
            <person name="Calvo S."/>
            <person name="Engels R."/>
            <person name="Smirnov S."/>
            <person name="Atnoor D."/>
            <person name="Brown A."/>
            <person name="Allen N."/>
            <person name="Naylor J."/>
            <person name="Stange-Thomann N."/>
            <person name="DeArellano K."/>
            <person name="Johnson R."/>
            <person name="Linton L."/>
            <person name="McEwan P."/>
            <person name="McKernan K."/>
            <person name="Talamas J."/>
            <person name="Tirrell A."/>
            <person name="Ye W."/>
            <person name="Zimmer A."/>
            <person name="Barber R.D."/>
            <person name="Cann I."/>
            <person name="Graham D.E."/>
            <person name="Grahame D.A."/>
            <person name="Guss A.M."/>
            <person name="Hedderich R."/>
            <person name="Ingram-Smith C."/>
            <person name="Kuettner H.C."/>
            <person name="Krzycki J.A."/>
            <person name="Leigh J.A."/>
            <person name="Li W."/>
            <person name="Liu J."/>
            <person name="Mukhopadhyay B."/>
            <person name="Reeve J.N."/>
            <person name="Smith K."/>
            <person name="Springer T.A."/>
            <person name="Umayam L.A."/>
            <person name="White O."/>
            <person name="White R.H."/>
            <person name="de Macario E.C."/>
            <person name="Ferry J.G."/>
            <person name="Jarrell K.F."/>
            <person name="Jing H."/>
            <person name="Macario A.J.L."/>
            <person name="Paulsen I.T."/>
            <person name="Pritchett M."/>
            <person name="Sowers K.R."/>
            <person name="Swanson R.V."/>
            <person name="Zinder S.H."/>
            <person name="Lander E."/>
            <person name="Metcalf W.W."/>
            <person name="Birren B."/>
        </authorList>
    </citation>
    <scope>NUCLEOTIDE SEQUENCE [LARGE SCALE GENOMIC DNA]</scope>
    <source>
        <strain>ATCC 35395 / DSM 2834 / JCM 12185 / C2A</strain>
    </source>
</reference>
<reference key="2">
    <citation type="journal article" date="2019" name="Nat. Chem. Biol.">
        <title>Identification of a radical SAM enzyme involved in the synthesis of archaeosine.</title>
        <authorList>
            <person name="Yokogawa T."/>
            <person name="Nomura Y."/>
            <person name="Yasuda A."/>
            <person name="Ogino H."/>
            <person name="Hiura K."/>
            <person name="Nakada S."/>
            <person name="Oka N."/>
            <person name="Ando K."/>
            <person name="Kawamura T."/>
            <person name="Hirata A."/>
            <person name="Hori H."/>
            <person name="Ohno S."/>
        </authorList>
    </citation>
    <scope>FUNCTION</scope>
    <scope>COFACTOR</scope>
    <scope>CATALYTIC ACTIVITY</scope>
    <scope>PATHWAY</scope>
    <scope>INTERACTION WITH ARCS</scope>
    <scope>MUTAGENESIS OF CYS-51; CYS-59 AND CYS-62</scope>
    <scope>REACTION MECHANISM</scope>
</reference>
<keyword id="KW-0004">4Fe-4S</keyword>
<keyword id="KW-0408">Iron</keyword>
<keyword id="KW-0411">Iron-sulfur</keyword>
<keyword id="KW-0456">Lyase</keyword>
<keyword id="KW-0479">Metal-binding</keyword>
<keyword id="KW-1185">Reference proteome</keyword>
<keyword id="KW-0949">S-adenosyl-L-methionine</keyword>
<keyword id="KW-0819">tRNA processing</keyword>
<name>RASEA_METAC</name>
<dbReference type="EC" id="4.3.2.-" evidence="3"/>
<dbReference type="EMBL" id="AE010299">
    <property type="protein sequence ID" value="AAM07853.1"/>
    <property type="status" value="ALT_INIT"/>
    <property type="molecule type" value="Genomic_DNA"/>
</dbReference>
<dbReference type="RefSeq" id="WP_048066004.1">
    <property type="nucleotide sequence ID" value="NC_003552.1"/>
</dbReference>
<dbReference type="SMR" id="Q8THK1"/>
<dbReference type="STRING" id="188937.MA_4513"/>
<dbReference type="EnsemblBacteria" id="AAM07853">
    <property type="protein sequence ID" value="AAM07853"/>
    <property type="gene ID" value="MA_4513"/>
</dbReference>
<dbReference type="GeneID" id="1476407"/>
<dbReference type="KEGG" id="mac:MA_4513"/>
<dbReference type="HOGENOM" id="CLU_060488_0_0_2"/>
<dbReference type="InParanoid" id="Q8THK1"/>
<dbReference type="OrthoDB" id="105445at2157"/>
<dbReference type="PhylomeDB" id="Q8THK1"/>
<dbReference type="BRENDA" id="2.6.1.B20">
    <property type="organism ID" value="7224"/>
</dbReference>
<dbReference type="UniPathway" id="UPA00393"/>
<dbReference type="Proteomes" id="UP000002487">
    <property type="component" value="Chromosome"/>
</dbReference>
<dbReference type="GO" id="GO:0005737">
    <property type="term" value="C:cytoplasm"/>
    <property type="evidence" value="ECO:0000318"/>
    <property type="project" value="GO_Central"/>
</dbReference>
<dbReference type="GO" id="GO:0051539">
    <property type="term" value="F:4 iron, 4 sulfur cluster binding"/>
    <property type="evidence" value="ECO:0007669"/>
    <property type="project" value="UniProtKB-KW"/>
</dbReference>
<dbReference type="GO" id="GO:0016829">
    <property type="term" value="F:lyase activity"/>
    <property type="evidence" value="ECO:0007669"/>
    <property type="project" value="UniProtKB-KW"/>
</dbReference>
<dbReference type="GO" id="GO:0046872">
    <property type="term" value="F:metal ion binding"/>
    <property type="evidence" value="ECO:0007669"/>
    <property type="project" value="UniProtKB-KW"/>
</dbReference>
<dbReference type="GO" id="GO:0002926">
    <property type="term" value="P:tRNA wobble base 5-methoxycarbonylmethyl-2-thiouridinylation"/>
    <property type="evidence" value="ECO:0000318"/>
    <property type="project" value="GO_Central"/>
</dbReference>
<dbReference type="CDD" id="cd01335">
    <property type="entry name" value="Radical_SAM"/>
    <property type="match status" value="1"/>
</dbReference>
<dbReference type="InterPro" id="IPR039661">
    <property type="entry name" value="ELP3"/>
</dbReference>
<dbReference type="InterPro" id="IPR006638">
    <property type="entry name" value="Elp3/MiaA/NifB-like_rSAM"/>
</dbReference>
<dbReference type="InterPro" id="IPR005909">
    <property type="entry name" value="RaSEA"/>
</dbReference>
<dbReference type="InterPro" id="IPR007197">
    <property type="entry name" value="rSAM"/>
</dbReference>
<dbReference type="NCBIfam" id="TIGR01210">
    <property type="entry name" value="archaeosine biosynthesis radical SAM protein RaSEA"/>
    <property type="match status" value="1"/>
</dbReference>
<dbReference type="PANTHER" id="PTHR11135:SF0">
    <property type="entry name" value="ELONGATOR COMPLEX PROTEIN 3"/>
    <property type="match status" value="1"/>
</dbReference>
<dbReference type="PANTHER" id="PTHR11135">
    <property type="entry name" value="HISTONE ACETYLTRANSFERASE-RELATED"/>
    <property type="match status" value="1"/>
</dbReference>
<dbReference type="Pfam" id="PF04055">
    <property type="entry name" value="Radical_SAM"/>
    <property type="match status" value="1"/>
</dbReference>
<dbReference type="PIRSF" id="PIRSF004954">
    <property type="entry name" value="Radical_SAM"/>
    <property type="match status" value="1"/>
</dbReference>
<dbReference type="SFLD" id="SFLDS00029">
    <property type="entry name" value="Radical_SAM"/>
    <property type="match status" value="1"/>
</dbReference>
<dbReference type="SMART" id="SM00729">
    <property type="entry name" value="Elp3"/>
    <property type="match status" value="1"/>
</dbReference>
<dbReference type="SUPFAM" id="SSF102114">
    <property type="entry name" value="Radical SAM enzymes"/>
    <property type="match status" value="1"/>
</dbReference>
<dbReference type="PROSITE" id="PS51918">
    <property type="entry name" value="RADICAL_SAM"/>
    <property type="match status" value="1"/>
</dbReference>
<protein>
    <recommendedName>
        <fullName evidence="4">Archaeosine synthase subunit beta</fullName>
        <ecNumber evidence="3">4.3.2.-</ecNumber>
    </recommendedName>
    <alternativeName>
        <fullName evidence="4">Archaeosine synthase, q0kN-tRNA lyase subunit</fullName>
    </alternativeName>
    <alternativeName>
        <fullName evidence="4">Radical SAM enzyme for archaeosine formation</fullName>
        <shortName evidence="4">RaSEA</shortName>
    </alternativeName>
</protein>